<comment type="function">
    <text evidence="7 8">Has fibrino(geno)lytic activity on the alpha and beta chains of fibrinogen (FGA and FGB). Inhibits human ADP- and collagen-induced platelet aggregation on platelet-rich plasma but does not affect the thrombin-induced aggregation of rabbit washed platelets. Slightly degrades plasminogen.</text>
</comment>
<comment type="catalytic activity">
    <reaction>
        <text>Hydrolysis of 14-Ala-|-Leu-15 in insulin B chain and 413-Lys-|-Leu-414 in alpha-chain of fibrinogen.</text>
        <dbReference type="EC" id="3.4.24.72"/>
    </reaction>
</comment>
<comment type="cofactor">
    <cofactor evidence="1">
        <name>Zn(2+)</name>
        <dbReference type="ChEBI" id="CHEBI:29105"/>
    </cofactor>
    <text evidence="2">Binds 1 zinc ion per subunit.</text>
</comment>
<comment type="activity regulation">
    <text evidence="7">Activated by calcium and magnesium ions. Inhibited by EDTA, DTT and L-cysteine. Activity is not affected by PMSF or heparin.</text>
</comment>
<comment type="subunit">
    <text evidence="1">Monomer.</text>
</comment>
<comment type="subcellular location">
    <subcellularLocation>
        <location evidence="6">Secreted</location>
    </subcellularLocation>
</comment>
<comment type="tissue specificity">
    <text evidence="10">Expressed by the venom gland.</text>
</comment>
<comment type="PTM">
    <text evidence="7">Glycosylated.</text>
</comment>
<comment type="mass spectrometry" mass="22830.0" method="MALDI" evidence="6"/>
<comment type="miscellaneous">
    <text>Negative results: has no hemorrhagic activity. Has no activity toward factor X (F10), prothrombin (F2) and protein C (PROC).</text>
</comment>
<comment type="similarity">
    <text evidence="9">Belongs to the venom metalloproteinase (M12B) family. P-I subfamily.</text>
</comment>
<name>VM1F_MACLB</name>
<dbReference type="EC" id="3.4.24.72"/>
<dbReference type="SMR" id="P83255"/>
<dbReference type="MEROPS" id="M12.164"/>
<dbReference type="GO" id="GO:0005576">
    <property type="term" value="C:extracellular region"/>
    <property type="evidence" value="ECO:0007669"/>
    <property type="project" value="UniProtKB-SubCell"/>
</dbReference>
<dbReference type="GO" id="GO:0005886">
    <property type="term" value="C:plasma membrane"/>
    <property type="evidence" value="ECO:0007669"/>
    <property type="project" value="TreeGrafter"/>
</dbReference>
<dbReference type="GO" id="GO:0005509">
    <property type="term" value="F:calcium ion binding"/>
    <property type="evidence" value="ECO:0000304"/>
    <property type="project" value="UniProtKB"/>
</dbReference>
<dbReference type="GO" id="GO:0000287">
    <property type="term" value="F:magnesium ion binding"/>
    <property type="evidence" value="ECO:0000304"/>
    <property type="project" value="UniProtKB"/>
</dbReference>
<dbReference type="GO" id="GO:0004222">
    <property type="term" value="F:metalloendopeptidase activity"/>
    <property type="evidence" value="ECO:0000314"/>
    <property type="project" value="UniProtKB"/>
</dbReference>
<dbReference type="GO" id="GO:0090729">
    <property type="term" value="F:toxin activity"/>
    <property type="evidence" value="ECO:0007669"/>
    <property type="project" value="UniProtKB-KW"/>
</dbReference>
<dbReference type="GO" id="GO:0006508">
    <property type="term" value="P:proteolysis"/>
    <property type="evidence" value="ECO:0000314"/>
    <property type="project" value="UniProtKB"/>
</dbReference>
<dbReference type="GO" id="GO:0030193">
    <property type="term" value="P:regulation of blood coagulation"/>
    <property type="evidence" value="ECO:0000304"/>
    <property type="project" value="UniProtKB"/>
</dbReference>
<dbReference type="CDD" id="cd04269">
    <property type="entry name" value="ZnMc_adamalysin_II_like"/>
    <property type="match status" value="1"/>
</dbReference>
<dbReference type="FunFam" id="3.40.390.10:FF:000002">
    <property type="entry name" value="Disintegrin and metalloproteinase domain-containing protein 22"/>
    <property type="match status" value="1"/>
</dbReference>
<dbReference type="Gene3D" id="3.40.390.10">
    <property type="entry name" value="Collagenase (Catalytic Domain)"/>
    <property type="match status" value="1"/>
</dbReference>
<dbReference type="InterPro" id="IPR024079">
    <property type="entry name" value="MetalloPept_cat_dom_sf"/>
</dbReference>
<dbReference type="InterPro" id="IPR001590">
    <property type="entry name" value="Peptidase_M12B"/>
</dbReference>
<dbReference type="InterPro" id="IPR034027">
    <property type="entry name" value="Reprolysin_adamalysin"/>
</dbReference>
<dbReference type="PANTHER" id="PTHR11905">
    <property type="entry name" value="ADAM A DISINTEGRIN AND METALLOPROTEASE DOMAIN"/>
    <property type="match status" value="1"/>
</dbReference>
<dbReference type="PANTHER" id="PTHR11905:SF32">
    <property type="entry name" value="DISINTEGRIN AND METALLOPROTEINASE DOMAIN-CONTAINING PROTEIN 28"/>
    <property type="match status" value="1"/>
</dbReference>
<dbReference type="Pfam" id="PF01421">
    <property type="entry name" value="Reprolysin"/>
    <property type="match status" value="1"/>
</dbReference>
<dbReference type="SUPFAM" id="SSF55486">
    <property type="entry name" value="Metalloproteases ('zincins'), catalytic domain"/>
    <property type="match status" value="1"/>
</dbReference>
<dbReference type="PROSITE" id="PS50215">
    <property type="entry name" value="ADAM_MEPRO"/>
    <property type="match status" value="1"/>
</dbReference>
<dbReference type="PROSITE" id="PS00142">
    <property type="entry name" value="ZINC_PROTEASE"/>
    <property type="match status" value="1"/>
</dbReference>
<proteinExistence type="evidence at protein level"/>
<organism evidence="9">
    <name type="scientific">Macrovipera lebetinus</name>
    <name type="common">Levantine viper</name>
    <name type="synonym">Vipera lebetina</name>
    <dbReference type="NCBI Taxonomy" id="3148341"/>
    <lineage>
        <taxon>Eukaryota</taxon>
        <taxon>Metazoa</taxon>
        <taxon>Chordata</taxon>
        <taxon>Craniata</taxon>
        <taxon>Vertebrata</taxon>
        <taxon>Euteleostomi</taxon>
        <taxon>Lepidosauria</taxon>
        <taxon>Squamata</taxon>
        <taxon>Bifurcata</taxon>
        <taxon>Unidentata</taxon>
        <taxon>Episquamata</taxon>
        <taxon>Toxicofera</taxon>
        <taxon>Serpentes</taxon>
        <taxon>Colubroidea</taxon>
        <taxon>Viperidae</taxon>
        <taxon>Viperinae</taxon>
        <taxon>Macrovipera</taxon>
    </lineage>
</organism>
<protein>
    <recommendedName>
        <fullName>Snake venom metalloproteinase fibrolase</fullName>
        <shortName>SVMP</shortName>
        <ecNumber>3.4.24.72</ecNumber>
    </recommendedName>
    <alternativeName>
        <fullName>Fibrinolytic proteinase</fullName>
    </alternativeName>
    <alternativeName>
        <fullName>Non-hemorrhagic fibrinolytic metalloproteinase</fullName>
    </alternativeName>
    <alternativeName>
        <fullName>VlF</fullName>
    </alternativeName>
</protein>
<sequence length="202" mass="22851">ERFAPRYIELVIVADHSVATKYNDNVTAILSWVHQLVNNIILFYRDLNVHFTLSAVEVWSNGDLINVQPEATVTLNLFGEWRERDLLNRRMHDNAQLLNNVALDDNTIGLAYDEGMCDPKYSVGIVKDHSAINRMVAATMAHEIGHNLGMNHDGSQCNCGGNGCVMSAVLMQQHSYQFSDCSKDEYQRYLTNHNPQCILNQP</sequence>
<accession>P83255</accession>
<reference evidence="9" key="1">
    <citation type="journal article" date="2000" name="Biochim. Biophys. Acta">
        <title>Amino acid sequence of VlF: identification in the C-terminal domain of residues common to non-hemorrhagic metalloproteinases from snake venoms.</title>
        <authorList>
            <person name="Gasmi A."/>
            <person name="Srairi N."/>
            <person name="Karoui H."/>
            <person name="El Ayeb M."/>
        </authorList>
    </citation>
    <scope>PROTEIN SEQUENCE</scope>
    <scope>MASS SPECTROMETRY</scope>
    <scope>SUBCELLULAR LOCATION</scope>
    <source>
        <tissue>Venom</tissue>
    </source>
</reference>
<reference evidence="9" key="2">
    <citation type="journal article" date="1991" name="Toxicon">
        <title>Purification and characterization of a fibrinogenase from Vipera lebetina (desert adder) venom.</title>
        <authorList>
            <person name="Gasmi A."/>
            <person name="Karoui M."/>
            <person name="Benlasfar Z."/>
            <person name="Karoui H."/>
            <person name="El Ayeb M."/>
            <person name="Dellagi K."/>
        </authorList>
    </citation>
    <scope>FUNCTION</scope>
    <scope>ACTIVITY REGULATION</scope>
    <source>
        <tissue>Venom</tissue>
    </source>
</reference>
<reference evidence="9" key="3">
    <citation type="journal article" date="1997" name="Thromb. Res.">
        <title>Further characterization and thrombolytic activity in a rat model of a fibrinogenase from Vipera lebetina venom.</title>
        <authorList>
            <person name="Gasmi A."/>
            <person name="Chabchoub A."/>
            <person name="Guermazi S."/>
            <person name="Karoui H."/>
            <person name="El Ayeb M."/>
            <person name="Dellagi K."/>
        </authorList>
    </citation>
    <scope>FUNCTION</scope>
</reference>
<keyword id="KW-0106">Calcium</keyword>
<keyword id="KW-0903">Direct protein sequencing</keyword>
<keyword id="KW-1015">Disulfide bond</keyword>
<keyword id="KW-1206">Fibrinogenolytic toxin</keyword>
<keyword id="KW-1205">Fibrinolytic toxin</keyword>
<keyword id="KW-0325">Glycoprotein</keyword>
<keyword id="KW-1199">Hemostasis impairing toxin</keyword>
<keyword id="KW-0378">Hydrolase</keyword>
<keyword id="KW-0460">Magnesium</keyword>
<keyword id="KW-0479">Metal-binding</keyword>
<keyword id="KW-0482">Metalloprotease</keyword>
<keyword id="KW-0617">Plasminogen activation</keyword>
<keyword id="KW-1201">Platelet aggregation inhibiting toxin</keyword>
<keyword id="KW-0645">Protease</keyword>
<keyword id="KW-0964">Secreted</keyword>
<keyword id="KW-0800">Toxin</keyword>
<keyword id="KW-0862">Zinc</keyword>
<feature type="chain" id="PRO_0000078198" description="Snake venom metalloproteinase fibrolase">
    <location>
        <begin position="1"/>
        <end position="202"/>
    </location>
</feature>
<feature type="domain" description="Peptidase M12B" evidence="4">
    <location>
        <begin position="6"/>
        <end position="202"/>
    </location>
</feature>
<feature type="active site" evidence="4 5">
    <location>
        <position position="143"/>
    </location>
</feature>
<feature type="binding site" evidence="1">
    <location>
        <position position="9"/>
    </location>
    <ligand>
        <name>Ca(2+)</name>
        <dbReference type="ChEBI" id="CHEBI:29108"/>
    </ligand>
</feature>
<feature type="binding site" evidence="1">
    <location>
        <position position="93"/>
    </location>
    <ligand>
        <name>Ca(2+)</name>
        <dbReference type="ChEBI" id="CHEBI:29108"/>
    </ligand>
</feature>
<feature type="binding site" evidence="1">
    <location>
        <position position="142"/>
    </location>
    <ligand>
        <name>Zn(2+)</name>
        <dbReference type="ChEBI" id="CHEBI:29105"/>
        <note>catalytic</note>
    </ligand>
</feature>
<feature type="binding site" evidence="1">
    <location>
        <position position="146"/>
    </location>
    <ligand>
        <name>Zn(2+)</name>
        <dbReference type="ChEBI" id="CHEBI:29105"/>
        <note>catalytic</note>
    </ligand>
</feature>
<feature type="binding site" evidence="1">
    <location>
        <position position="152"/>
    </location>
    <ligand>
        <name>Zn(2+)</name>
        <dbReference type="ChEBI" id="CHEBI:29105"/>
        <note>catalytic</note>
    </ligand>
</feature>
<feature type="binding site" evidence="1">
    <location>
        <position position="197"/>
    </location>
    <ligand>
        <name>Ca(2+)</name>
        <dbReference type="ChEBI" id="CHEBI:29108"/>
    </ligand>
</feature>
<feature type="binding site" evidence="1">
    <location>
        <position position="200"/>
    </location>
    <ligand>
        <name>Ca(2+)</name>
        <dbReference type="ChEBI" id="CHEBI:29108"/>
    </ligand>
</feature>
<feature type="glycosylation site" description="N-linked (GlcNAc...) asparagine" evidence="3">
    <location>
        <position position="25"/>
    </location>
</feature>
<feature type="disulfide bond" evidence="4">
    <location>
        <begin position="117"/>
        <end position="197"/>
    </location>
</feature>
<feature type="disulfide bond" evidence="4">
    <location>
        <begin position="157"/>
        <end position="181"/>
    </location>
</feature>
<feature type="disulfide bond" evidence="4">
    <location>
        <begin position="159"/>
        <end position="164"/>
    </location>
</feature>
<evidence type="ECO:0000250" key="1"/>
<evidence type="ECO:0000250" key="2">
    <source>
        <dbReference type="UniProtKB" id="P85420"/>
    </source>
</evidence>
<evidence type="ECO:0000255" key="3"/>
<evidence type="ECO:0000255" key="4">
    <source>
        <dbReference type="PROSITE-ProRule" id="PRU00276"/>
    </source>
</evidence>
<evidence type="ECO:0000255" key="5">
    <source>
        <dbReference type="PROSITE-ProRule" id="PRU10095"/>
    </source>
</evidence>
<evidence type="ECO:0000269" key="6">
    <source>
    </source>
</evidence>
<evidence type="ECO:0000269" key="7">
    <source>
    </source>
</evidence>
<evidence type="ECO:0000269" key="8">
    <source>
    </source>
</evidence>
<evidence type="ECO:0000305" key="9"/>
<evidence type="ECO:0000305" key="10">
    <source>
    </source>
</evidence>